<accession>Q052K2</accession>
<feature type="chain" id="PRO_1000005289" description="Small ribosomal subunit protein bS6">
    <location>
        <begin position="1"/>
        <end position="91"/>
    </location>
</feature>
<comment type="function">
    <text evidence="1">Binds together with bS18 to 16S ribosomal RNA.</text>
</comment>
<comment type="similarity">
    <text evidence="1">Belongs to the bacterial ribosomal protein bS6 family.</text>
</comment>
<keyword id="KW-0687">Ribonucleoprotein</keyword>
<keyword id="KW-0689">Ribosomal protein</keyword>
<keyword id="KW-0694">RNA-binding</keyword>
<keyword id="KW-0699">rRNA-binding</keyword>
<organism>
    <name type="scientific">Leptospira borgpetersenii serovar Hardjo-bovis (strain L550)</name>
    <dbReference type="NCBI Taxonomy" id="355276"/>
    <lineage>
        <taxon>Bacteria</taxon>
        <taxon>Pseudomonadati</taxon>
        <taxon>Spirochaetota</taxon>
        <taxon>Spirochaetia</taxon>
        <taxon>Leptospirales</taxon>
        <taxon>Leptospiraceae</taxon>
        <taxon>Leptospira</taxon>
    </lineage>
</organism>
<dbReference type="EMBL" id="CP000348">
    <property type="protein sequence ID" value="ABJ78743.1"/>
    <property type="molecule type" value="Genomic_DNA"/>
</dbReference>
<dbReference type="RefSeq" id="WP_002749849.1">
    <property type="nucleotide sequence ID" value="NC_008508.1"/>
</dbReference>
<dbReference type="SMR" id="Q052K2"/>
<dbReference type="KEGG" id="lbl:LBL_1245"/>
<dbReference type="HOGENOM" id="CLU_113441_5_1_12"/>
<dbReference type="GO" id="GO:1990904">
    <property type="term" value="C:ribonucleoprotein complex"/>
    <property type="evidence" value="ECO:0007669"/>
    <property type="project" value="UniProtKB-KW"/>
</dbReference>
<dbReference type="GO" id="GO:0005840">
    <property type="term" value="C:ribosome"/>
    <property type="evidence" value="ECO:0007669"/>
    <property type="project" value="UniProtKB-KW"/>
</dbReference>
<dbReference type="GO" id="GO:0019843">
    <property type="term" value="F:rRNA binding"/>
    <property type="evidence" value="ECO:0007669"/>
    <property type="project" value="UniProtKB-UniRule"/>
</dbReference>
<dbReference type="GO" id="GO:0003735">
    <property type="term" value="F:structural constituent of ribosome"/>
    <property type="evidence" value="ECO:0007669"/>
    <property type="project" value="InterPro"/>
</dbReference>
<dbReference type="GO" id="GO:0006412">
    <property type="term" value="P:translation"/>
    <property type="evidence" value="ECO:0007669"/>
    <property type="project" value="UniProtKB-UniRule"/>
</dbReference>
<dbReference type="CDD" id="cd00473">
    <property type="entry name" value="bS6"/>
    <property type="match status" value="1"/>
</dbReference>
<dbReference type="FunFam" id="3.30.70.60:FF:000009">
    <property type="entry name" value="30S ribosomal protein S6"/>
    <property type="match status" value="1"/>
</dbReference>
<dbReference type="Gene3D" id="3.30.70.60">
    <property type="match status" value="1"/>
</dbReference>
<dbReference type="HAMAP" id="MF_00360">
    <property type="entry name" value="Ribosomal_bS6"/>
    <property type="match status" value="1"/>
</dbReference>
<dbReference type="InterPro" id="IPR000529">
    <property type="entry name" value="Ribosomal_bS6"/>
</dbReference>
<dbReference type="InterPro" id="IPR035980">
    <property type="entry name" value="Ribosomal_bS6_sf"/>
</dbReference>
<dbReference type="InterPro" id="IPR020814">
    <property type="entry name" value="Ribosomal_S6_plastid/chlpt"/>
</dbReference>
<dbReference type="InterPro" id="IPR014717">
    <property type="entry name" value="Transl_elong_EF1B/ribsomal_bS6"/>
</dbReference>
<dbReference type="NCBIfam" id="TIGR00166">
    <property type="entry name" value="S6"/>
    <property type="match status" value="1"/>
</dbReference>
<dbReference type="Pfam" id="PF01250">
    <property type="entry name" value="Ribosomal_S6"/>
    <property type="match status" value="1"/>
</dbReference>
<dbReference type="SUPFAM" id="SSF54995">
    <property type="entry name" value="Ribosomal protein S6"/>
    <property type="match status" value="1"/>
</dbReference>
<proteinExistence type="inferred from homology"/>
<gene>
    <name evidence="1" type="primary">rpsF</name>
    <name type="ordered locus">LBL_1245</name>
</gene>
<reference key="1">
    <citation type="journal article" date="2006" name="Proc. Natl. Acad. Sci. U.S.A.">
        <title>Genome reduction in Leptospira borgpetersenii reflects limited transmission potential.</title>
        <authorList>
            <person name="Bulach D.M."/>
            <person name="Zuerner R.L."/>
            <person name="Wilson P."/>
            <person name="Seemann T."/>
            <person name="McGrath A."/>
            <person name="Cullen P.A."/>
            <person name="Davis J."/>
            <person name="Johnson M."/>
            <person name="Kuczek E."/>
            <person name="Alt D.P."/>
            <person name="Peterson-Burch B."/>
            <person name="Coppel R.L."/>
            <person name="Rood J.I."/>
            <person name="Davies J.K."/>
            <person name="Adler B."/>
        </authorList>
    </citation>
    <scope>NUCLEOTIDE SEQUENCE [LARGE SCALE GENOMIC DNA]</scope>
    <source>
        <strain>L550</strain>
    </source>
</reference>
<name>RS6_LEPBL</name>
<sequence>MRNYELTTITRVSSREVTKSEVQDTLNKFSVSVTADEDWGQRKLWHPIKHEEQGIFHHYKCSAEPSAIEKVEKEFLINQNILRSMVVRLDG</sequence>
<evidence type="ECO:0000255" key="1">
    <source>
        <dbReference type="HAMAP-Rule" id="MF_00360"/>
    </source>
</evidence>
<evidence type="ECO:0000305" key="2"/>
<protein>
    <recommendedName>
        <fullName evidence="1">Small ribosomal subunit protein bS6</fullName>
    </recommendedName>
    <alternativeName>
        <fullName evidence="2">30S ribosomal protein S6</fullName>
    </alternativeName>
</protein>